<name>NPT1_RABIT</name>
<proteinExistence type="evidence at transcript level"/>
<keyword id="KW-1003">Cell membrane</keyword>
<keyword id="KW-0325">Glycoprotein</keyword>
<keyword id="KW-0406">Ion transport</keyword>
<keyword id="KW-0472">Membrane</keyword>
<keyword id="KW-1185">Reference proteome</keyword>
<keyword id="KW-0915">Sodium</keyword>
<keyword id="KW-0739">Sodium transport</keyword>
<keyword id="KW-0769">Symport</keyword>
<keyword id="KW-0812">Transmembrane</keyword>
<keyword id="KW-1133">Transmembrane helix</keyword>
<keyword id="KW-0813">Transport</keyword>
<evidence type="ECO:0000250" key="1">
    <source>
        <dbReference type="UniProtKB" id="Q14916"/>
    </source>
</evidence>
<evidence type="ECO:0000250" key="2">
    <source>
        <dbReference type="UniProtKB" id="Q61983"/>
    </source>
</evidence>
<evidence type="ECO:0000255" key="3"/>
<evidence type="ECO:0000269" key="4">
    <source>
    </source>
</evidence>
<evidence type="ECO:0000305" key="5"/>
<protein>
    <recommendedName>
        <fullName>Sodium-dependent phosphate transport protein 1</fullName>
    </recommendedName>
    <alternativeName>
        <fullName>NAPI-1</fullName>
    </alternativeName>
    <alternativeName>
        <fullName>Na(+)/PI cotransporter 1</fullName>
    </alternativeName>
    <alternativeName>
        <fullName>Renal Na(+)-dependent phosphate cotransporter 1</fullName>
    </alternativeName>
    <alternativeName>
        <fullName>Renal sodium-dependent phosphate transport protein 1</fullName>
        <shortName>Renal sodium-phosphate transport protein 1</shortName>
    </alternativeName>
    <alternativeName>
        <fullName>Sodium/phosphate cotransporter 1</fullName>
    </alternativeName>
    <alternativeName>
        <fullName>Solute carrier family 17 member 1</fullName>
    </alternativeName>
</protein>
<reference key="1">
    <citation type="journal article" date="1991" name="Proc. Natl. Acad. Sci. U.S.A.">
        <title>Cloning and expression of cDNA for a Na/Pi cotransport system of kidney cortex.</title>
        <authorList>
            <person name="Werner A."/>
            <person name="Moore M.L."/>
            <person name="Mantei N."/>
            <person name="Biber J."/>
            <person name="Semenza G."/>
            <person name="Murer H."/>
        </authorList>
    </citation>
    <scope>NUCLEOTIDE SEQUENCE [MRNA]</scope>
    <scope>TISSUE SPECIFICITY</scope>
    <source>
        <tissue>Kidney cortex</tissue>
    </source>
</reference>
<feature type="chain" id="PRO_0000220938" description="Sodium-dependent phosphate transport protein 1">
    <location>
        <begin position="1"/>
        <end position="465"/>
    </location>
</feature>
<feature type="transmembrane region" description="Helical" evidence="3">
    <location>
        <begin position="79"/>
        <end position="99"/>
    </location>
</feature>
<feature type="transmembrane region" description="Helical" evidence="3">
    <location>
        <begin position="109"/>
        <end position="129"/>
    </location>
</feature>
<feature type="transmembrane region" description="Helical" evidence="3">
    <location>
        <begin position="171"/>
        <end position="191"/>
    </location>
</feature>
<feature type="transmembrane region" description="Helical" evidence="3">
    <location>
        <begin position="198"/>
        <end position="218"/>
    </location>
</feature>
<feature type="transmembrane region" description="Helical" evidence="3">
    <location>
        <begin position="255"/>
        <end position="275"/>
    </location>
</feature>
<feature type="transmembrane region" description="Helical" evidence="3">
    <location>
        <begin position="304"/>
        <end position="324"/>
    </location>
</feature>
<feature type="transmembrane region" description="Helical" evidence="3">
    <location>
        <begin position="337"/>
        <end position="357"/>
    </location>
</feature>
<feature type="transmembrane region" description="Helical" evidence="3">
    <location>
        <begin position="363"/>
        <end position="383"/>
    </location>
</feature>
<feature type="transmembrane region" description="Helical" evidence="3">
    <location>
        <begin position="399"/>
        <end position="419"/>
    </location>
</feature>
<feature type="transmembrane region" description="Helical" evidence="3">
    <location>
        <begin position="428"/>
        <end position="448"/>
    </location>
</feature>
<feature type="glycosylation site" description="N-linked (GlcNAc...) asparagine" evidence="3">
    <location>
        <position position="47"/>
    </location>
</feature>
<feature type="glycosylation site" description="N-linked (GlcNAc...) asparagine" evidence="3">
    <location>
        <position position="56"/>
    </location>
</feature>
<comment type="function">
    <text evidence="1">Important for the resorption of phosphate by the kidney. May be involved in actively transporting phosphate into cells via Na(+) cotransport in the renal brush border membrane. Plays a role in urate transport in the kidney.</text>
</comment>
<comment type="catalytic activity">
    <reaction evidence="1">
        <text>3 Na(+)(out) + phosphate(out) = 3 Na(+)(in) + phosphate(in)</text>
        <dbReference type="Rhea" id="RHEA:71255"/>
        <dbReference type="ChEBI" id="CHEBI:29101"/>
        <dbReference type="ChEBI" id="CHEBI:43474"/>
    </reaction>
</comment>
<comment type="catalytic activity">
    <reaction evidence="1">
        <text>urate(out) = urate(in)</text>
        <dbReference type="Rhea" id="RHEA:60368"/>
        <dbReference type="ChEBI" id="CHEBI:17775"/>
    </reaction>
</comment>
<comment type="subunit">
    <text evidence="2">Interacts with PDZK1.</text>
</comment>
<comment type="subcellular location">
    <subcellularLocation>
        <location evidence="1">Apical cell membrane</location>
        <topology evidence="3">Multi-pass membrane protein</topology>
    </subcellularLocation>
</comment>
<comment type="tissue specificity">
    <text evidence="4">Kidney cortex and liver.</text>
</comment>
<comment type="similarity">
    <text evidence="5">Belongs to the major facilitator superfamily. Sodium/anion cotransporter family.</text>
</comment>
<gene>
    <name type="primary">SLC17A1</name>
    <name type="synonym">NPT1</name>
</gene>
<sequence>MDNQFPSRKGPCFCSFRYVLALFMHFCNIVIIAQRMCLSLTMVAMVNNTNLHGSPNTSAEKRLDNTKNPVYNWSPDVQGIIFSSIFYGAFLIQIPVGYISGIYSIKKLIGFALFLSSLVSIFIPQAAAVGETWIIVCRVVQGITQGTVTTAQHEIWVKWAPPLERGRLTSMSLSGFLLGPFIVLLVTGIICESLGWPMVFYIFGACGCAVCLLWFVLYYDDPKDHPCVSLHEKEYITSSLIQQGSSTRQSLPIKAMIKSLPLWAISFCCFAYLWTYSRLIVYTPTLINSMLHVDIRENGLLSSLPYLFAWICGVIAGHTADFLMSRNMLSLTAIRKLFTAIGLLLPIVFSMCLLYLSSGFYSTITFLILANASSSFCLGGALINALDLAPRYYVFIKGVTTLIGMTGGMTSSTVAGLFLSQDPESSWFKIFLLMSIINVISVIFYLIFAKAEIQDWAKEKQHTRL</sequence>
<dbReference type="EMBL" id="M76466">
    <property type="protein sequence ID" value="AAA31461.1"/>
    <property type="molecule type" value="mRNA"/>
</dbReference>
<dbReference type="PIR" id="A56410">
    <property type="entry name" value="A56410"/>
</dbReference>
<dbReference type="RefSeq" id="NP_001075776.1">
    <property type="nucleotide sequence ID" value="NM_001082307.1"/>
</dbReference>
<dbReference type="SMR" id="Q28722"/>
<dbReference type="FunCoup" id="Q28722">
    <property type="interactions" value="9"/>
</dbReference>
<dbReference type="STRING" id="9986.ENSOCUP00000012050"/>
<dbReference type="GlyCosmos" id="Q28722">
    <property type="glycosylation" value="2 sites, No reported glycans"/>
</dbReference>
<dbReference type="PaxDb" id="9986-ENSOCUP00000012050"/>
<dbReference type="GeneID" id="100009144"/>
<dbReference type="KEGG" id="ocu:100009144"/>
<dbReference type="CTD" id="6568"/>
<dbReference type="eggNOG" id="KOG2532">
    <property type="taxonomic scope" value="Eukaryota"/>
</dbReference>
<dbReference type="InParanoid" id="Q28722"/>
<dbReference type="OrthoDB" id="2985014at2759"/>
<dbReference type="Proteomes" id="UP000001811">
    <property type="component" value="Unplaced"/>
</dbReference>
<dbReference type="GO" id="GO:0016324">
    <property type="term" value="C:apical plasma membrane"/>
    <property type="evidence" value="ECO:0000250"/>
    <property type="project" value="UniProtKB"/>
</dbReference>
<dbReference type="GO" id="GO:0005315">
    <property type="term" value="F:phosphate transmembrane transporter activity"/>
    <property type="evidence" value="ECO:0007669"/>
    <property type="project" value="InterPro"/>
</dbReference>
<dbReference type="GO" id="GO:0015293">
    <property type="term" value="F:symporter activity"/>
    <property type="evidence" value="ECO:0007669"/>
    <property type="project" value="UniProtKB-KW"/>
</dbReference>
<dbReference type="GO" id="GO:0006820">
    <property type="term" value="P:monoatomic anion transport"/>
    <property type="evidence" value="ECO:0007669"/>
    <property type="project" value="TreeGrafter"/>
</dbReference>
<dbReference type="GO" id="GO:0035435">
    <property type="term" value="P:phosphate ion transmembrane transport"/>
    <property type="evidence" value="ECO:0007669"/>
    <property type="project" value="InterPro"/>
</dbReference>
<dbReference type="GO" id="GO:0006814">
    <property type="term" value="P:sodium ion transport"/>
    <property type="evidence" value="ECO:0007669"/>
    <property type="project" value="UniProtKB-KW"/>
</dbReference>
<dbReference type="GO" id="GO:0044341">
    <property type="term" value="P:sodium-dependent phosphate transport"/>
    <property type="evidence" value="ECO:0000250"/>
    <property type="project" value="UniProtKB"/>
</dbReference>
<dbReference type="GO" id="GO:0015747">
    <property type="term" value="P:urate transport"/>
    <property type="evidence" value="ECO:0000250"/>
    <property type="project" value="UniProtKB"/>
</dbReference>
<dbReference type="CDD" id="cd17318">
    <property type="entry name" value="MFS_SLC17"/>
    <property type="match status" value="1"/>
</dbReference>
<dbReference type="FunFam" id="1.20.1250.20:FF:000003">
    <property type="entry name" value="Solute carrier family 17 member 3"/>
    <property type="match status" value="1"/>
</dbReference>
<dbReference type="FunFam" id="1.20.1250.20:FF:000060">
    <property type="entry name" value="Solute carrier family 17 member 3"/>
    <property type="match status" value="1"/>
</dbReference>
<dbReference type="Gene3D" id="1.20.1250.20">
    <property type="entry name" value="MFS general substrate transporter like domains"/>
    <property type="match status" value="2"/>
</dbReference>
<dbReference type="InterPro" id="IPR011701">
    <property type="entry name" value="MFS"/>
</dbReference>
<dbReference type="InterPro" id="IPR020846">
    <property type="entry name" value="MFS_dom"/>
</dbReference>
<dbReference type="InterPro" id="IPR050382">
    <property type="entry name" value="MFS_Na/Anion_cotransporter"/>
</dbReference>
<dbReference type="InterPro" id="IPR036259">
    <property type="entry name" value="MFS_trans_sf"/>
</dbReference>
<dbReference type="InterPro" id="IPR004745">
    <property type="entry name" value="Pi_cotranspt"/>
</dbReference>
<dbReference type="NCBIfam" id="TIGR00894">
    <property type="entry name" value="2A0114euk"/>
    <property type="match status" value="1"/>
</dbReference>
<dbReference type="PANTHER" id="PTHR11662:SF26">
    <property type="entry name" value="SODIUM-DEPENDENT PHOSPHATE TRANSPORT PROTEIN 1"/>
    <property type="match status" value="1"/>
</dbReference>
<dbReference type="PANTHER" id="PTHR11662">
    <property type="entry name" value="SOLUTE CARRIER FAMILY 17"/>
    <property type="match status" value="1"/>
</dbReference>
<dbReference type="Pfam" id="PF07690">
    <property type="entry name" value="MFS_1"/>
    <property type="match status" value="1"/>
</dbReference>
<dbReference type="SUPFAM" id="SSF103473">
    <property type="entry name" value="MFS general substrate transporter"/>
    <property type="match status" value="1"/>
</dbReference>
<dbReference type="PROSITE" id="PS50850">
    <property type="entry name" value="MFS"/>
    <property type="match status" value="1"/>
</dbReference>
<organism>
    <name type="scientific">Oryctolagus cuniculus</name>
    <name type="common">Rabbit</name>
    <dbReference type="NCBI Taxonomy" id="9986"/>
    <lineage>
        <taxon>Eukaryota</taxon>
        <taxon>Metazoa</taxon>
        <taxon>Chordata</taxon>
        <taxon>Craniata</taxon>
        <taxon>Vertebrata</taxon>
        <taxon>Euteleostomi</taxon>
        <taxon>Mammalia</taxon>
        <taxon>Eutheria</taxon>
        <taxon>Euarchontoglires</taxon>
        <taxon>Glires</taxon>
        <taxon>Lagomorpha</taxon>
        <taxon>Leporidae</taxon>
        <taxon>Oryctolagus</taxon>
    </lineage>
</organism>
<accession>Q28722</accession>